<feature type="chain" id="PRO_0000406471" description="Transcription activator of gluconeogenesis ERT1-1">
    <location>
        <begin position="1"/>
        <end position="354"/>
    </location>
</feature>
<feature type="DNA-binding region" description="Zn(2)-C6 fungal-type" evidence="2">
    <location>
        <begin position="32"/>
        <end position="60"/>
    </location>
</feature>
<feature type="region of interest" description="Disordered" evidence="3">
    <location>
        <begin position="1"/>
        <end position="29"/>
    </location>
</feature>
<feature type="region of interest" description="Disordered" evidence="3">
    <location>
        <begin position="71"/>
        <end position="111"/>
    </location>
</feature>
<feature type="region of interest" description="Disordered" evidence="3">
    <location>
        <begin position="128"/>
        <end position="169"/>
    </location>
</feature>
<feature type="compositionally biased region" description="Low complexity" evidence="3">
    <location>
        <begin position="81"/>
        <end position="98"/>
    </location>
</feature>
<feature type="compositionally biased region" description="Polar residues" evidence="3">
    <location>
        <begin position="159"/>
        <end position="169"/>
    </location>
</feature>
<gene>
    <name type="primary">ERT1-1</name>
    <name type="ordered locus">YALI0E18304g</name>
</gene>
<sequence length="354" mass="39357">MSFYPILRGPAKQESPPPPPAPKKRRKTARACLHCQKAHLTCDEGRPCARCIKKNMGDQCVDGKRKQAKYLVGLPPTPPGQATQQKQQQQQQQQQAVQHGMGPPDTDFGSSAANLEYSILSNILGRGDTSSPPDFFPAQSPHMPSPMSIPGLHMEEEGSQTAGTPQGSPTDIYTSITKPYAYTTGFHALIAYLKSRFEKKELLDVVKSMAFYRPSFIATTQTLQYEDLVFMEKCFQRTLLEFEKYISLSGTPTVLWRRTGQIAAVGKEFCVLTMRSQADLLSQFIIECMDNKSVVQYFDVFSELAFEDSRGTITTTFGLTKPSGEVVNTACSLTIKRDVFDIPMMIVGNFLPIL</sequence>
<proteinExistence type="inferred from homology"/>
<organism>
    <name type="scientific">Yarrowia lipolytica (strain CLIB 122 / E 150)</name>
    <name type="common">Yeast</name>
    <name type="synonym">Candida lipolytica</name>
    <dbReference type="NCBI Taxonomy" id="284591"/>
    <lineage>
        <taxon>Eukaryota</taxon>
        <taxon>Fungi</taxon>
        <taxon>Dikarya</taxon>
        <taxon>Ascomycota</taxon>
        <taxon>Saccharomycotina</taxon>
        <taxon>Dipodascomycetes</taxon>
        <taxon>Dipodascales</taxon>
        <taxon>Dipodascales incertae sedis</taxon>
        <taxon>Yarrowia</taxon>
    </lineage>
</organism>
<reference key="1">
    <citation type="journal article" date="2004" name="Nature">
        <title>Genome evolution in yeasts.</title>
        <authorList>
            <person name="Dujon B."/>
            <person name="Sherman D."/>
            <person name="Fischer G."/>
            <person name="Durrens P."/>
            <person name="Casaregola S."/>
            <person name="Lafontaine I."/>
            <person name="de Montigny J."/>
            <person name="Marck C."/>
            <person name="Neuveglise C."/>
            <person name="Talla E."/>
            <person name="Goffard N."/>
            <person name="Frangeul L."/>
            <person name="Aigle M."/>
            <person name="Anthouard V."/>
            <person name="Babour A."/>
            <person name="Barbe V."/>
            <person name="Barnay S."/>
            <person name="Blanchin S."/>
            <person name="Beckerich J.-M."/>
            <person name="Beyne E."/>
            <person name="Bleykasten C."/>
            <person name="Boisrame A."/>
            <person name="Boyer J."/>
            <person name="Cattolico L."/>
            <person name="Confanioleri F."/>
            <person name="de Daruvar A."/>
            <person name="Despons L."/>
            <person name="Fabre E."/>
            <person name="Fairhead C."/>
            <person name="Ferry-Dumazet H."/>
            <person name="Groppi A."/>
            <person name="Hantraye F."/>
            <person name="Hennequin C."/>
            <person name="Jauniaux N."/>
            <person name="Joyet P."/>
            <person name="Kachouri R."/>
            <person name="Kerrest A."/>
            <person name="Koszul R."/>
            <person name="Lemaire M."/>
            <person name="Lesur I."/>
            <person name="Ma L."/>
            <person name="Muller H."/>
            <person name="Nicaud J.-M."/>
            <person name="Nikolski M."/>
            <person name="Oztas S."/>
            <person name="Ozier-Kalogeropoulos O."/>
            <person name="Pellenz S."/>
            <person name="Potier S."/>
            <person name="Richard G.-F."/>
            <person name="Straub M.-L."/>
            <person name="Suleau A."/>
            <person name="Swennen D."/>
            <person name="Tekaia F."/>
            <person name="Wesolowski-Louvel M."/>
            <person name="Westhof E."/>
            <person name="Wirth B."/>
            <person name="Zeniou-Meyer M."/>
            <person name="Zivanovic Y."/>
            <person name="Bolotin-Fukuhara M."/>
            <person name="Thierry A."/>
            <person name="Bouchier C."/>
            <person name="Caudron B."/>
            <person name="Scarpelli C."/>
            <person name="Gaillardin C."/>
            <person name="Weissenbach J."/>
            <person name="Wincker P."/>
            <person name="Souciet J.-L."/>
        </authorList>
    </citation>
    <scope>NUCLEOTIDE SEQUENCE [LARGE SCALE GENOMIC DNA]</scope>
    <source>
        <strain>CLIB 122 / E 150</strain>
    </source>
</reference>
<name>ERT11_YARLI</name>
<evidence type="ECO:0000250" key="1"/>
<evidence type="ECO:0000255" key="2">
    <source>
        <dbReference type="PROSITE-ProRule" id="PRU00227"/>
    </source>
</evidence>
<evidence type="ECO:0000256" key="3">
    <source>
        <dbReference type="SAM" id="MobiDB-lite"/>
    </source>
</evidence>
<evidence type="ECO:0000305" key="4"/>
<keyword id="KW-0010">Activator</keyword>
<keyword id="KW-0238">DNA-binding</keyword>
<keyword id="KW-0312">Gluconeogenesis</keyword>
<keyword id="KW-0479">Metal-binding</keyword>
<keyword id="KW-0539">Nucleus</keyword>
<keyword id="KW-1185">Reference proteome</keyword>
<keyword id="KW-0804">Transcription</keyword>
<keyword id="KW-0805">Transcription regulation</keyword>
<keyword id="KW-0862">Zinc</keyword>
<dbReference type="EMBL" id="CR382131">
    <property type="protein sequence ID" value="CAG79694.1"/>
    <property type="molecule type" value="Genomic_DNA"/>
</dbReference>
<dbReference type="RefSeq" id="XP_504099.1">
    <property type="nucleotide sequence ID" value="XM_504099.1"/>
</dbReference>
<dbReference type="SMR" id="Q6C5G3"/>
<dbReference type="EnsemblFungi" id="CAG79694">
    <property type="protein sequence ID" value="CAG79694"/>
    <property type="gene ID" value="YALI0_E18304g"/>
</dbReference>
<dbReference type="KEGG" id="yli:2911712"/>
<dbReference type="VEuPathDB" id="FungiDB:YALI0_E18304g"/>
<dbReference type="HOGENOM" id="CLU_010748_2_1_1"/>
<dbReference type="InParanoid" id="Q6C5G3"/>
<dbReference type="OMA" id="EDLIYME"/>
<dbReference type="OrthoDB" id="116391at4891"/>
<dbReference type="Proteomes" id="UP000001300">
    <property type="component" value="Chromosome E"/>
</dbReference>
<dbReference type="GO" id="GO:0005634">
    <property type="term" value="C:nucleus"/>
    <property type="evidence" value="ECO:0000318"/>
    <property type="project" value="GO_Central"/>
</dbReference>
<dbReference type="GO" id="GO:0003700">
    <property type="term" value="F:DNA-binding transcription factor activity"/>
    <property type="evidence" value="ECO:0000318"/>
    <property type="project" value="GO_Central"/>
</dbReference>
<dbReference type="GO" id="GO:0000981">
    <property type="term" value="F:DNA-binding transcription factor activity, RNA polymerase II-specific"/>
    <property type="evidence" value="ECO:0007669"/>
    <property type="project" value="InterPro"/>
</dbReference>
<dbReference type="GO" id="GO:0000977">
    <property type="term" value="F:RNA polymerase II transcription regulatory region sequence-specific DNA binding"/>
    <property type="evidence" value="ECO:0000318"/>
    <property type="project" value="GO_Central"/>
</dbReference>
<dbReference type="GO" id="GO:0008270">
    <property type="term" value="F:zinc ion binding"/>
    <property type="evidence" value="ECO:0007669"/>
    <property type="project" value="InterPro"/>
</dbReference>
<dbReference type="GO" id="GO:0009267">
    <property type="term" value="P:cellular response to starvation"/>
    <property type="evidence" value="ECO:0000318"/>
    <property type="project" value="GO_Central"/>
</dbReference>
<dbReference type="GO" id="GO:0006094">
    <property type="term" value="P:gluconeogenesis"/>
    <property type="evidence" value="ECO:0007669"/>
    <property type="project" value="UniProtKB-KW"/>
</dbReference>
<dbReference type="CDD" id="cd00067">
    <property type="entry name" value="GAL4"/>
    <property type="match status" value="1"/>
</dbReference>
<dbReference type="Gene3D" id="4.10.240.10">
    <property type="entry name" value="Zn(2)-C6 fungal-type DNA-binding domain"/>
    <property type="match status" value="1"/>
</dbReference>
<dbReference type="InterPro" id="IPR050335">
    <property type="entry name" value="ERT1_acuK_gluconeogen_tf"/>
</dbReference>
<dbReference type="InterPro" id="IPR056751">
    <property type="entry name" value="PAS_13"/>
</dbReference>
<dbReference type="InterPro" id="IPR036864">
    <property type="entry name" value="Zn2-C6_fun-type_DNA-bd_sf"/>
</dbReference>
<dbReference type="InterPro" id="IPR001138">
    <property type="entry name" value="Zn2Cys6_DnaBD"/>
</dbReference>
<dbReference type="PANTHER" id="PTHR47659:SF1">
    <property type="entry name" value="TRANSCRIPTION ACTIVATOR OF GLUCONEOGENESIS ERT1"/>
    <property type="match status" value="1"/>
</dbReference>
<dbReference type="PANTHER" id="PTHR47659">
    <property type="entry name" value="ZN(II)2CYS6 TRANSCRIPTION FACTOR (EUROFUNG)-RELATED"/>
    <property type="match status" value="1"/>
</dbReference>
<dbReference type="Pfam" id="PF24990">
    <property type="entry name" value="PAS_13"/>
    <property type="match status" value="2"/>
</dbReference>
<dbReference type="Pfam" id="PF00172">
    <property type="entry name" value="Zn_clus"/>
    <property type="match status" value="1"/>
</dbReference>
<dbReference type="SMART" id="SM00066">
    <property type="entry name" value="GAL4"/>
    <property type="match status" value="1"/>
</dbReference>
<dbReference type="SUPFAM" id="SSF57701">
    <property type="entry name" value="Zn2/Cys6 DNA-binding domain"/>
    <property type="match status" value="1"/>
</dbReference>
<dbReference type="PROSITE" id="PS50048">
    <property type="entry name" value="ZN2_CY6_FUNGAL_2"/>
    <property type="match status" value="1"/>
</dbReference>
<comment type="function">
    <text evidence="1">Transcription factor which regulates nonfermentable carbon utilization. Activator of gluconeogenetic genes (By similarity).</text>
</comment>
<comment type="subcellular location">
    <subcellularLocation>
        <location evidence="2">Nucleus</location>
    </subcellularLocation>
</comment>
<comment type="similarity">
    <text evidence="4">Belongs to the ERT1/acuK family.</text>
</comment>
<accession>Q6C5G3</accession>
<protein>
    <recommendedName>
        <fullName>Transcription activator of gluconeogenesis ERT1-1</fullName>
    </recommendedName>
</protein>